<reference key="1">
    <citation type="journal article" date="2009" name="Genome Biol.">
        <title>A whole-genome assembly of the domestic cow, Bos taurus.</title>
        <authorList>
            <person name="Zimin A.V."/>
            <person name="Delcher A.L."/>
            <person name="Florea L."/>
            <person name="Kelley D.R."/>
            <person name="Schatz M.C."/>
            <person name="Puiu D."/>
            <person name="Hanrahan F."/>
            <person name="Pertea G."/>
            <person name="Van Tassell C.P."/>
            <person name="Sonstegard T.S."/>
            <person name="Marcais G."/>
            <person name="Roberts M."/>
            <person name="Subramanian P."/>
            <person name="Yorke J.A."/>
            <person name="Salzberg S.L."/>
        </authorList>
    </citation>
    <scope>NUCLEOTIDE SEQUENCE [LARGE SCALE GENOMIC DNA]</scope>
    <source>
        <strain>Hereford</strain>
    </source>
</reference>
<gene>
    <name type="primary">GIMD1</name>
</gene>
<keyword id="KW-0342">GTP-binding</keyword>
<keyword id="KW-0547">Nucleotide-binding</keyword>
<keyword id="KW-1185">Reference proteome</keyword>
<sequence length="216" mass="24634">MNSNKMTINLALFGMTQSGKSSAGNIILGSTDFHSSFAPCSVTRDCSLGRSCHFRSFMRRGGQEVTLQVQVLDTPGYPHSRLSKKHVRQEVREALAHHFGQEGLHLALLVQRADVPLCGQEESSPVQMIQELLGHTWMNYTAILFTHAEKIEEAGFNEDEYLREASETLLKLLNSIQHRYIFQYKKGNSLSEQRLKILERIIEFVKENCYQVLTFK</sequence>
<dbReference type="EMBL" id="DAAA02016657">
    <property type="status" value="NOT_ANNOTATED_CDS"/>
    <property type="molecule type" value="Genomic_DNA"/>
</dbReference>
<dbReference type="SMR" id="G3MZQ6"/>
<dbReference type="PaxDb" id="9913-ENSBTAP00000055059"/>
<dbReference type="eggNOG" id="ENOG502S1B7">
    <property type="taxonomic scope" value="Eukaryota"/>
</dbReference>
<dbReference type="HOGENOM" id="CLU_010468_3_3_1"/>
<dbReference type="InParanoid" id="G3MZQ6"/>
<dbReference type="OMA" id="GKAMTDP"/>
<dbReference type="OrthoDB" id="8954335at2759"/>
<dbReference type="Proteomes" id="UP000009136">
    <property type="component" value="Unplaced"/>
</dbReference>
<dbReference type="GO" id="GO:0005525">
    <property type="term" value="F:GTP binding"/>
    <property type="evidence" value="ECO:0007669"/>
    <property type="project" value="UniProtKB-KW"/>
</dbReference>
<dbReference type="FunFam" id="3.40.50.300:FF:001392">
    <property type="entry name" value="GTPase IMAP family member GIMD1"/>
    <property type="match status" value="1"/>
</dbReference>
<dbReference type="Gene3D" id="3.40.50.300">
    <property type="entry name" value="P-loop containing nucleotide triphosphate hydrolases"/>
    <property type="match status" value="1"/>
</dbReference>
<dbReference type="InterPro" id="IPR006703">
    <property type="entry name" value="G_AIG1"/>
</dbReference>
<dbReference type="InterPro" id="IPR045058">
    <property type="entry name" value="GIMA/IAN/Toc"/>
</dbReference>
<dbReference type="InterPro" id="IPR027417">
    <property type="entry name" value="P-loop_NTPase"/>
</dbReference>
<dbReference type="PANTHER" id="PTHR10903:SF103">
    <property type="entry name" value="GTPASE IMAP FAMILY MEMBER GIMD1"/>
    <property type="match status" value="1"/>
</dbReference>
<dbReference type="PANTHER" id="PTHR10903">
    <property type="entry name" value="GTPASE, IMAP FAMILY MEMBER-RELATED"/>
    <property type="match status" value="1"/>
</dbReference>
<dbReference type="Pfam" id="PF04548">
    <property type="entry name" value="AIG1"/>
    <property type="match status" value="1"/>
</dbReference>
<dbReference type="SUPFAM" id="SSF52540">
    <property type="entry name" value="P-loop containing nucleoside triphosphate hydrolases"/>
    <property type="match status" value="1"/>
</dbReference>
<dbReference type="PROSITE" id="PS51720">
    <property type="entry name" value="G_AIG1"/>
    <property type="match status" value="1"/>
</dbReference>
<proteinExistence type="inferred from homology"/>
<evidence type="ECO:0000250" key="1"/>
<evidence type="ECO:0000255" key="2">
    <source>
        <dbReference type="PROSITE-ProRule" id="PRU01057"/>
    </source>
</evidence>
<evidence type="ECO:0000305" key="3"/>
<organism>
    <name type="scientific">Bos taurus</name>
    <name type="common">Bovine</name>
    <dbReference type="NCBI Taxonomy" id="9913"/>
    <lineage>
        <taxon>Eukaryota</taxon>
        <taxon>Metazoa</taxon>
        <taxon>Chordata</taxon>
        <taxon>Craniata</taxon>
        <taxon>Vertebrata</taxon>
        <taxon>Euteleostomi</taxon>
        <taxon>Mammalia</taxon>
        <taxon>Eutheria</taxon>
        <taxon>Laurasiatheria</taxon>
        <taxon>Artiodactyla</taxon>
        <taxon>Ruminantia</taxon>
        <taxon>Pecora</taxon>
        <taxon>Bovidae</taxon>
        <taxon>Bovinae</taxon>
        <taxon>Bos</taxon>
    </lineage>
</organism>
<feature type="chain" id="PRO_0000419198" description="GTPase IMAP family member GIMD1">
    <location>
        <begin position="1"/>
        <end position="216"/>
    </location>
</feature>
<feature type="domain" description="AIG1-type G" evidence="2">
    <location>
        <begin position="5"/>
        <end position="216"/>
    </location>
</feature>
<feature type="binding site" evidence="1">
    <location>
        <begin position="14"/>
        <end position="22"/>
    </location>
    <ligand>
        <name>GTP</name>
        <dbReference type="ChEBI" id="CHEBI:37565"/>
    </ligand>
</feature>
<feature type="binding site" evidence="1">
    <location>
        <position position="35"/>
    </location>
    <ligand>
        <name>GTP</name>
        <dbReference type="ChEBI" id="CHEBI:37565"/>
    </ligand>
</feature>
<feature type="binding site" evidence="1">
    <location>
        <begin position="147"/>
        <end position="149"/>
    </location>
    <ligand>
        <name>GTP</name>
        <dbReference type="ChEBI" id="CHEBI:37565"/>
    </ligand>
</feature>
<protein>
    <recommendedName>
        <fullName>GTPase IMAP family member GIMD1</fullName>
    </recommendedName>
    <alternativeName>
        <fullName>GIMAP family P-loop NTPase domain-containing protein 1</fullName>
    </alternativeName>
</protein>
<accession>G3MZQ6</accession>
<name>GIMD1_BOVIN</name>
<comment type="similarity">
    <text evidence="3">Belongs to the TRAFAC class TrmE-Era-EngA-EngB-Septin-like GTPase superfamily. AIG1/Toc34/Toc159-like paraseptin GTPase family. IAN subfamily.</text>
</comment>